<comment type="function">
    <text evidence="1">Catalyzes the NADPH-dependent reduction of L-glutamate 5-phosphate into L-glutamate 5-semialdehyde and phosphate. The product spontaneously undergoes cyclization to form 1-pyrroline-5-carboxylate.</text>
</comment>
<comment type="catalytic activity">
    <reaction evidence="1">
        <text>L-glutamate 5-semialdehyde + phosphate + NADP(+) = L-glutamyl 5-phosphate + NADPH + H(+)</text>
        <dbReference type="Rhea" id="RHEA:19541"/>
        <dbReference type="ChEBI" id="CHEBI:15378"/>
        <dbReference type="ChEBI" id="CHEBI:43474"/>
        <dbReference type="ChEBI" id="CHEBI:57783"/>
        <dbReference type="ChEBI" id="CHEBI:58066"/>
        <dbReference type="ChEBI" id="CHEBI:58274"/>
        <dbReference type="ChEBI" id="CHEBI:58349"/>
        <dbReference type="EC" id="1.2.1.41"/>
    </reaction>
</comment>
<comment type="pathway">
    <text evidence="1">Amino-acid biosynthesis; L-proline biosynthesis; L-glutamate 5-semialdehyde from L-glutamate: step 2/2.</text>
</comment>
<comment type="subcellular location">
    <subcellularLocation>
        <location evidence="1">Cytoplasm</location>
    </subcellularLocation>
</comment>
<comment type="similarity">
    <text evidence="1">Belongs to the gamma-glutamyl phosphate reductase family.</text>
</comment>
<sequence>MNEVLAKGKKAKEIARELVLKSTEQKNEALSAIADQLILETAYILEENKKDIEEGKAKGFSDSLLDRLMLNEQRIVDMTEGIKQLIELRDPVGDCVSAWERPNGLSIQEMRVPLGVVGMIYEARPNVTVDAATICLKTGNAVILRGSSSAIHSNKAIVAVIHRALKQTSLPQESVQLIEDTTRDSAKQLFTMNDYLDVLIPRGGKQLIDTVVREASVPVLETGAGNCHVFIDETADKQMAFDIIINAKTQRPSVCNAIETIVLHEKWAEQYGSELFSSLKKRGVELRGDQKALAMDSSIVLASEEDWGTEFLSLTLAVKLVSSIEEAIHHINTYGSMHSEAIISENEENVSKFFVSVDAAALYHNASTRFTDGYEFGFGAEIGISTQKLHVRGPMGLPALTSIKYVIRGNGQIRK</sequence>
<protein>
    <recommendedName>
        <fullName evidence="1">Gamma-glutamyl phosphate reductase</fullName>
        <shortName evidence="1">GPR</shortName>
        <ecNumber evidence="1">1.2.1.41</ecNumber>
    </recommendedName>
    <alternativeName>
        <fullName evidence="1">Glutamate-5-semialdehyde dehydrogenase</fullName>
    </alternativeName>
    <alternativeName>
        <fullName evidence="1">Glutamyl-gamma-semialdehyde dehydrogenase</fullName>
        <shortName evidence="1">GSA dehydrogenase</shortName>
    </alternativeName>
</protein>
<evidence type="ECO:0000255" key="1">
    <source>
        <dbReference type="HAMAP-Rule" id="MF_00412"/>
    </source>
</evidence>
<keyword id="KW-0028">Amino-acid biosynthesis</keyword>
<keyword id="KW-0963">Cytoplasm</keyword>
<keyword id="KW-0521">NADP</keyword>
<keyword id="KW-0560">Oxidoreductase</keyword>
<keyword id="KW-0641">Proline biosynthesis</keyword>
<name>PROA_BACCZ</name>
<reference key="1">
    <citation type="journal article" date="2006" name="J. Bacteriol.">
        <title>Pathogenomic sequence analysis of Bacillus cereus and Bacillus thuringiensis isolates closely related to Bacillus anthracis.</title>
        <authorList>
            <person name="Han C.S."/>
            <person name="Xie G."/>
            <person name="Challacombe J.F."/>
            <person name="Altherr M.R."/>
            <person name="Bhotika S.S."/>
            <person name="Bruce D."/>
            <person name="Campbell C.S."/>
            <person name="Campbell M.L."/>
            <person name="Chen J."/>
            <person name="Chertkov O."/>
            <person name="Cleland C."/>
            <person name="Dimitrijevic M."/>
            <person name="Doggett N.A."/>
            <person name="Fawcett J.J."/>
            <person name="Glavina T."/>
            <person name="Goodwin L.A."/>
            <person name="Hill K.K."/>
            <person name="Hitchcock P."/>
            <person name="Jackson P.J."/>
            <person name="Keim P."/>
            <person name="Kewalramani A.R."/>
            <person name="Longmire J."/>
            <person name="Lucas S."/>
            <person name="Malfatti S."/>
            <person name="McMurry K."/>
            <person name="Meincke L.J."/>
            <person name="Misra M."/>
            <person name="Moseman B.L."/>
            <person name="Mundt M."/>
            <person name="Munk A.C."/>
            <person name="Okinaka R.T."/>
            <person name="Parson-Quintana B."/>
            <person name="Reilly L.P."/>
            <person name="Richardson P."/>
            <person name="Robinson D.L."/>
            <person name="Rubin E."/>
            <person name="Saunders E."/>
            <person name="Tapia R."/>
            <person name="Tesmer J.G."/>
            <person name="Thayer N."/>
            <person name="Thompson L.S."/>
            <person name="Tice H."/>
            <person name="Ticknor L.O."/>
            <person name="Wills P.L."/>
            <person name="Brettin T.S."/>
            <person name="Gilna P."/>
        </authorList>
    </citation>
    <scope>NUCLEOTIDE SEQUENCE [LARGE SCALE GENOMIC DNA]</scope>
    <source>
        <strain>ZK / E33L</strain>
    </source>
</reference>
<gene>
    <name evidence="1" type="primary">proA</name>
    <name type="ordered locus">BCE33L2711</name>
</gene>
<feature type="chain" id="PRO_0000189688" description="Gamma-glutamyl phosphate reductase">
    <location>
        <begin position="1"/>
        <end position="415"/>
    </location>
</feature>
<dbReference type="EC" id="1.2.1.41" evidence="1"/>
<dbReference type="EMBL" id="CP000001">
    <property type="protein sequence ID" value="AAU17550.1"/>
    <property type="molecule type" value="Genomic_DNA"/>
</dbReference>
<dbReference type="RefSeq" id="WP_001006631.1">
    <property type="nucleotide sequence ID" value="NC_006274.1"/>
</dbReference>
<dbReference type="SMR" id="Q639W9"/>
<dbReference type="KEGG" id="bcz:BCE33L2711"/>
<dbReference type="PATRIC" id="fig|288681.22.peg.2751"/>
<dbReference type="UniPathway" id="UPA00098">
    <property type="reaction ID" value="UER00360"/>
</dbReference>
<dbReference type="Proteomes" id="UP000002612">
    <property type="component" value="Chromosome"/>
</dbReference>
<dbReference type="GO" id="GO:0005737">
    <property type="term" value="C:cytoplasm"/>
    <property type="evidence" value="ECO:0007669"/>
    <property type="project" value="UniProtKB-SubCell"/>
</dbReference>
<dbReference type="GO" id="GO:0004350">
    <property type="term" value="F:glutamate-5-semialdehyde dehydrogenase activity"/>
    <property type="evidence" value="ECO:0007669"/>
    <property type="project" value="UniProtKB-UniRule"/>
</dbReference>
<dbReference type="GO" id="GO:0050661">
    <property type="term" value="F:NADP binding"/>
    <property type="evidence" value="ECO:0007669"/>
    <property type="project" value="InterPro"/>
</dbReference>
<dbReference type="GO" id="GO:0055129">
    <property type="term" value="P:L-proline biosynthetic process"/>
    <property type="evidence" value="ECO:0007669"/>
    <property type="project" value="UniProtKB-UniRule"/>
</dbReference>
<dbReference type="CDD" id="cd07079">
    <property type="entry name" value="ALDH_F18-19_ProA-GPR"/>
    <property type="match status" value="1"/>
</dbReference>
<dbReference type="FunFam" id="3.40.309.10:FF:000006">
    <property type="entry name" value="Gamma-glutamyl phosphate reductase"/>
    <property type="match status" value="1"/>
</dbReference>
<dbReference type="Gene3D" id="3.40.605.10">
    <property type="entry name" value="Aldehyde Dehydrogenase, Chain A, domain 1"/>
    <property type="match status" value="1"/>
</dbReference>
<dbReference type="Gene3D" id="3.40.309.10">
    <property type="entry name" value="Aldehyde Dehydrogenase, Chain A, domain 2"/>
    <property type="match status" value="1"/>
</dbReference>
<dbReference type="HAMAP" id="MF_00412">
    <property type="entry name" value="ProA"/>
    <property type="match status" value="1"/>
</dbReference>
<dbReference type="InterPro" id="IPR016161">
    <property type="entry name" value="Ald_DH/histidinol_DH"/>
</dbReference>
<dbReference type="InterPro" id="IPR016163">
    <property type="entry name" value="Ald_DH_C"/>
</dbReference>
<dbReference type="InterPro" id="IPR016162">
    <property type="entry name" value="Ald_DH_N"/>
</dbReference>
<dbReference type="InterPro" id="IPR015590">
    <property type="entry name" value="Aldehyde_DH_dom"/>
</dbReference>
<dbReference type="InterPro" id="IPR020593">
    <property type="entry name" value="G-glutamylP_reductase_CS"/>
</dbReference>
<dbReference type="InterPro" id="IPR012134">
    <property type="entry name" value="Glu-5-SA_DH"/>
</dbReference>
<dbReference type="InterPro" id="IPR000965">
    <property type="entry name" value="GPR_dom"/>
</dbReference>
<dbReference type="NCBIfam" id="NF001221">
    <property type="entry name" value="PRK00197.1"/>
    <property type="match status" value="1"/>
</dbReference>
<dbReference type="NCBIfam" id="TIGR00407">
    <property type="entry name" value="proA"/>
    <property type="match status" value="1"/>
</dbReference>
<dbReference type="PANTHER" id="PTHR11063:SF8">
    <property type="entry name" value="DELTA-1-PYRROLINE-5-CARBOXYLATE SYNTHASE"/>
    <property type="match status" value="1"/>
</dbReference>
<dbReference type="PANTHER" id="PTHR11063">
    <property type="entry name" value="GLUTAMATE SEMIALDEHYDE DEHYDROGENASE"/>
    <property type="match status" value="1"/>
</dbReference>
<dbReference type="Pfam" id="PF00171">
    <property type="entry name" value="Aldedh"/>
    <property type="match status" value="1"/>
</dbReference>
<dbReference type="PIRSF" id="PIRSF000151">
    <property type="entry name" value="GPR"/>
    <property type="match status" value="1"/>
</dbReference>
<dbReference type="SUPFAM" id="SSF53720">
    <property type="entry name" value="ALDH-like"/>
    <property type="match status" value="1"/>
</dbReference>
<dbReference type="PROSITE" id="PS01223">
    <property type="entry name" value="PROA"/>
    <property type="match status" value="1"/>
</dbReference>
<organism>
    <name type="scientific">Bacillus cereus (strain ZK / E33L)</name>
    <dbReference type="NCBI Taxonomy" id="288681"/>
    <lineage>
        <taxon>Bacteria</taxon>
        <taxon>Bacillati</taxon>
        <taxon>Bacillota</taxon>
        <taxon>Bacilli</taxon>
        <taxon>Bacillales</taxon>
        <taxon>Bacillaceae</taxon>
        <taxon>Bacillus</taxon>
        <taxon>Bacillus cereus group</taxon>
    </lineage>
</organism>
<proteinExistence type="inferred from homology"/>
<accession>Q639W9</accession>